<dbReference type="EC" id="1.5.3.-" evidence="1"/>
<dbReference type="EMBL" id="CU928160">
    <property type="protein sequence ID" value="CAQ97958.1"/>
    <property type="molecule type" value="Genomic_DNA"/>
</dbReference>
<dbReference type="RefSeq" id="WP_000872815.1">
    <property type="nucleotide sequence ID" value="NC_011741.1"/>
</dbReference>
<dbReference type="SMR" id="B7M934"/>
<dbReference type="KEGG" id="ecr:ECIAI1_1094"/>
<dbReference type="HOGENOM" id="CLU_007884_2_1_6"/>
<dbReference type="GO" id="GO:0005829">
    <property type="term" value="C:cytosol"/>
    <property type="evidence" value="ECO:0007669"/>
    <property type="project" value="TreeGrafter"/>
</dbReference>
<dbReference type="GO" id="GO:0050660">
    <property type="term" value="F:flavin adenine dinucleotide binding"/>
    <property type="evidence" value="ECO:0007669"/>
    <property type="project" value="InterPro"/>
</dbReference>
<dbReference type="GO" id="GO:0050131">
    <property type="term" value="F:N-methyl-L-amino-acid oxidase activity"/>
    <property type="evidence" value="ECO:0007669"/>
    <property type="project" value="InterPro"/>
</dbReference>
<dbReference type="GO" id="GO:0008115">
    <property type="term" value="F:sarcosine oxidase activity"/>
    <property type="evidence" value="ECO:0007669"/>
    <property type="project" value="TreeGrafter"/>
</dbReference>
<dbReference type="Gene3D" id="3.30.9.10">
    <property type="entry name" value="D-Amino Acid Oxidase, subunit A, domain 2"/>
    <property type="match status" value="1"/>
</dbReference>
<dbReference type="Gene3D" id="3.50.50.60">
    <property type="entry name" value="FAD/NAD(P)-binding domain"/>
    <property type="match status" value="1"/>
</dbReference>
<dbReference type="HAMAP" id="MF_00515">
    <property type="entry name" value="MTOX"/>
    <property type="match status" value="1"/>
</dbReference>
<dbReference type="InterPro" id="IPR006076">
    <property type="entry name" value="FAD-dep_OxRdtase"/>
</dbReference>
<dbReference type="InterPro" id="IPR036188">
    <property type="entry name" value="FAD/NAD-bd_sf"/>
</dbReference>
<dbReference type="InterPro" id="IPR023493">
    <property type="entry name" value="Me_Trp_Oxase_MTOX"/>
</dbReference>
<dbReference type="InterPro" id="IPR045170">
    <property type="entry name" value="MTOX"/>
</dbReference>
<dbReference type="NCBIfam" id="NF008425">
    <property type="entry name" value="PRK11259.1"/>
    <property type="match status" value="1"/>
</dbReference>
<dbReference type="PANTHER" id="PTHR10961:SF7">
    <property type="entry name" value="FAD DEPENDENT OXIDOREDUCTASE DOMAIN-CONTAINING PROTEIN"/>
    <property type="match status" value="1"/>
</dbReference>
<dbReference type="PANTHER" id="PTHR10961">
    <property type="entry name" value="PEROXISOMAL SARCOSINE OXIDASE"/>
    <property type="match status" value="1"/>
</dbReference>
<dbReference type="Pfam" id="PF01266">
    <property type="entry name" value="DAO"/>
    <property type="match status" value="1"/>
</dbReference>
<dbReference type="SUPFAM" id="SSF54373">
    <property type="entry name" value="FAD-linked reductases, C-terminal domain"/>
    <property type="match status" value="1"/>
</dbReference>
<dbReference type="SUPFAM" id="SSF51905">
    <property type="entry name" value="FAD/NAD(P)-binding domain"/>
    <property type="match status" value="1"/>
</dbReference>
<evidence type="ECO:0000255" key="1">
    <source>
        <dbReference type="HAMAP-Rule" id="MF_00515"/>
    </source>
</evidence>
<comment type="function">
    <text evidence="1">Catalyzes the oxidative demethylation of N-methyl-L-tryptophan.</text>
</comment>
<comment type="catalytic activity">
    <reaction evidence="1">
        <text>N(alpha)-methyl-L-tryptophan + O2 + H2O = L-tryptophan + formaldehyde + H2O2</text>
        <dbReference type="Rhea" id="RHEA:28006"/>
        <dbReference type="ChEBI" id="CHEBI:15377"/>
        <dbReference type="ChEBI" id="CHEBI:15379"/>
        <dbReference type="ChEBI" id="CHEBI:16240"/>
        <dbReference type="ChEBI" id="CHEBI:16842"/>
        <dbReference type="ChEBI" id="CHEBI:57283"/>
        <dbReference type="ChEBI" id="CHEBI:57912"/>
    </reaction>
</comment>
<comment type="cofactor">
    <cofactor evidence="1">
        <name>FAD</name>
        <dbReference type="ChEBI" id="CHEBI:57692"/>
    </cofactor>
    <text evidence="1">Binds 1 FAD per subunit.</text>
</comment>
<comment type="subunit">
    <text evidence="1">Monomer.</text>
</comment>
<comment type="similarity">
    <text evidence="1">Belongs to the MSOX/MTOX family. MTOX subfamily.</text>
</comment>
<proteinExistence type="inferred from homology"/>
<sequence length="372" mass="40914">MKYDLIIIGSGSVGAAAGYYATRAGLNVLMTDAHMPPHQHGSHHGDTRLIRHAYGEGEKYVPLVLRAQTLWDELSRHNEDDPIFVRSGVINLGPADSAFLANVAHSAEQWQLNVEKLDAQGIMARWPEIRVPDNYIGLFETDSGFLRSELAIKTWIQLAKEAGCAQLFNCPVTAIRHDDDGVTIETVDGEYQAKKAIVCAGTWVKDLLPELPVQPVRKVFAWYQADGRYSVKNKFPAFTGELPNGDQYYGFPAENDALKIGKHNGGQVIHSADERVPFAEVVSDGSEAFPFLRNVLPGIGCCLYGAACTYDNSPDEDFIIDTLPGHDNTLLITGLSGHGFKFASVLGEIAADFAQDKKSDFDLTPFRLSRFQ</sequence>
<reference key="1">
    <citation type="journal article" date="2009" name="PLoS Genet.">
        <title>Organised genome dynamics in the Escherichia coli species results in highly diverse adaptive paths.</title>
        <authorList>
            <person name="Touchon M."/>
            <person name="Hoede C."/>
            <person name="Tenaillon O."/>
            <person name="Barbe V."/>
            <person name="Baeriswyl S."/>
            <person name="Bidet P."/>
            <person name="Bingen E."/>
            <person name="Bonacorsi S."/>
            <person name="Bouchier C."/>
            <person name="Bouvet O."/>
            <person name="Calteau A."/>
            <person name="Chiapello H."/>
            <person name="Clermont O."/>
            <person name="Cruveiller S."/>
            <person name="Danchin A."/>
            <person name="Diard M."/>
            <person name="Dossat C."/>
            <person name="Karoui M.E."/>
            <person name="Frapy E."/>
            <person name="Garry L."/>
            <person name="Ghigo J.M."/>
            <person name="Gilles A.M."/>
            <person name="Johnson J."/>
            <person name="Le Bouguenec C."/>
            <person name="Lescat M."/>
            <person name="Mangenot S."/>
            <person name="Martinez-Jehanne V."/>
            <person name="Matic I."/>
            <person name="Nassif X."/>
            <person name="Oztas S."/>
            <person name="Petit M.A."/>
            <person name="Pichon C."/>
            <person name="Rouy Z."/>
            <person name="Ruf C.S."/>
            <person name="Schneider D."/>
            <person name="Tourret J."/>
            <person name="Vacherie B."/>
            <person name="Vallenet D."/>
            <person name="Medigue C."/>
            <person name="Rocha E.P.C."/>
            <person name="Denamur E."/>
        </authorList>
    </citation>
    <scope>NUCLEOTIDE SEQUENCE [LARGE SCALE GENOMIC DNA]</scope>
    <source>
        <strain>IAI1</strain>
    </source>
</reference>
<feature type="chain" id="PRO_1000127437" description="N-methyl-L-tryptophan oxidase">
    <location>
        <begin position="1"/>
        <end position="372"/>
    </location>
</feature>
<feature type="binding site" evidence="1">
    <location>
        <begin position="4"/>
        <end position="34"/>
    </location>
    <ligand>
        <name>FAD</name>
        <dbReference type="ChEBI" id="CHEBI:57692"/>
    </ligand>
</feature>
<feature type="modified residue" description="S-8alpha-FAD cysteine" evidence="1">
    <location>
        <position position="308"/>
    </location>
</feature>
<protein>
    <recommendedName>
        <fullName evidence="1">N-methyl-L-tryptophan oxidase</fullName>
        <shortName evidence="1">MTOX</shortName>
        <ecNumber evidence="1">1.5.3.-</ecNumber>
    </recommendedName>
</protein>
<organism>
    <name type="scientific">Escherichia coli O8 (strain IAI1)</name>
    <dbReference type="NCBI Taxonomy" id="585034"/>
    <lineage>
        <taxon>Bacteria</taxon>
        <taxon>Pseudomonadati</taxon>
        <taxon>Pseudomonadota</taxon>
        <taxon>Gammaproteobacteria</taxon>
        <taxon>Enterobacterales</taxon>
        <taxon>Enterobacteriaceae</taxon>
        <taxon>Escherichia</taxon>
    </lineage>
</organism>
<keyword id="KW-0274">FAD</keyword>
<keyword id="KW-0285">Flavoprotein</keyword>
<keyword id="KW-0560">Oxidoreductase</keyword>
<name>MTOX_ECO8A</name>
<accession>B7M934</accession>
<gene>
    <name evidence="1" type="primary">solA</name>
    <name type="ordered locus">ECIAI1_1094</name>
</gene>